<comment type="function">
    <text evidence="1">Catalyzes the phosphorylation of pantothenate (Pan), the first step in CoA biosynthesis.</text>
</comment>
<comment type="catalytic activity">
    <reaction evidence="1">
        <text>(R)-pantothenate + ATP = (R)-4'-phosphopantothenate + ADP + H(+)</text>
        <dbReference type="Rhea" id="RHEA:16373"/>
        <dbReference type="ChEBI" id="CHEBI:10986"/>
        <dbReference type="ChEBI" id="CHEBI:15378"/>
        <dbReference type="ChEBI" id="CHEBI:29032"/>
        <dbReference type="ChEBI" id="CHEBI:30616"/>
        <dbReference type="ChEBI" id="CHEBI:456216"/>
        <dbReference type="EC" id="2.7.1.33"/>
    </reaction>
</comment>
<comment type="cofactor">
    <cofactor evidence="1">
        <name>NH4(+)</name>
        <dbReference type="ChEBI" id="CHEBI:28938"/>
    </cofactor>
    <cofactor evidence="1">
        <name>K(+)</name>
        <dbReference type="ChEBI" id="CHEBI:29103"/>
    </cofactor>
    <text evidence="1">A monovalent cation. Ammonium or potassium.</text>
</comment>
<comment type="pathway">
    <text evidence="1">Cofactor biosynthesis; coenzyme A biosynthesis; CoA from (R)-pantothenate: step 1/5.</text>
</comment>
<comment type="subunit">
    <text evidence="1">Homodimer.</text>
</comment>
<comment type="subcellular location">
    <subcellularLocation>
        <location evidence="1">Cytoplasm</location>
    </subcellularLocation>
</comment>
<comment type="similarity">
    <text evidence="1">Belongs to the type III pantothenate kinase family.</text>
</comment>
<sequence length="262" mass="29094">MIFVLDVGNTNAVLGVFEEGELRQHWRMETDRHKTEDEYGMLVKQLLEHEGLSFEDVKGIIVSSVVPPIMFALERMCEKYFKIKPLVVGPGIKTGLNIKYENPREVGADRIVNAVAGIHLYGSPLIIVDFGTATTYCYINEEKHYMGGVITPGIMISAEALYSRAAKLPRIEITKPSSVVGKNTVSAMQSGILYGYVGQVEGIVKRMKEEAKQEPKVIATGGLAKLISEESNVIDVVDPFLTLKGLYMLYERNANLQHEKGE</sequence>
<name>COAX_BACAA</name>
<feature type="chain" id="PRO_1000165185" description="Type III pantothenate kinase">
    <location>
        <begin position="1"/>
        <end position="262"/>
    </location>
</feature>
<feature type="active site" description="Proton acceptor" evidence="1">
    <location>
        <position position="109"/>
    </location>
</feature>
<feature type="binding site" evidence="1">
    <location>
        <begin position="6"/>
        <end position="13"/>
    </location>
    <ligand>
        <name>ATP</name>
        <dbReference type="ChEBI" id="CHEBI:30616"/>
    </ligand>
</feature>
<feature type="binding site" evidence="1">
    <location>
        <position position="100"/>
    </location>
    <ligand>
        <name>substrate</name>
    </ligand>
</feature>
<feature type="binding site" evidence="1">
    <location>
        <begin position="107"/>
        <end position="110"/>
    </location>
    <ligand>
        <name>substrate</name>
    </ligand>
</feature>
<feature type="binding site" evidence="1">
    <location>
        <position position="129"/>
    </location>
    <ligand>
        <name>K(+)</name>
        <dbReference type="ChEBI" id="CHEBI:29103"/>
    </ligand>
</feature>
<feature type="binding site" evidence="1">
    <location>
        <position position="132"/>
    </location>
    <ligand>
        <name>ATP</name>
        <dbReference type="ChEBI" id="CHEBI:30616"/>
    </ligand>
</feature>
<feature type="binding site" evidence="1">
    <location>
        <position position="184"/>
    </location>
    <ligand>
        <name>substrate</name>
    </ligand>
</feature>
<dbReference type="EC" id="2.7.1.33" evidence="1"/>
<dbReference type="EMBL" id="CP001598">
    <property type="protein sequence ID" value="ACQ47090.1"/>
    <property type="molecule type" value="Genomic_DNA"/>
</dbReference>
<dbReference type="RefSeq" id="WP_000578367.1">
    <property type="nucleotide sequence ID" value="NC_012659.1"/>
</dbReference>
<dbReference type="SMR" id="C3P9L2"/>
<dbReference type="KEGG" id="bai:BAA_0078"/>
<dbReference type="HOGENOM" id="CLU_066627_1_0_9"/>
<dbReference type="UniPathway" id="UPA00241">
    <property type="reaction ID" value="UER00352"/>
</dbReference>
<dbReference type="GO" id="GO:0005737">
    <property type="term" value="C:cytoplasm"/>
    <property type="evidence" value="ECO:0007669"/>
    <property type="project" value="UniProtKB-SubCell"/>
</dbReference>
<dbReference type="GO" id="GO:0005524">
    <property type="term" value="F:ATP binding"/>
    <property type="evidence" value="ECO:0007669"/>
    <property type="project" value="UniProtKB-UniRule"/>
</dbReference>
<dbReference type="GO" id="GO:0046872">
    <property type="term" value="F:metal ion binding"/>
    <property type="evidence" value="ECO:0007669"/>
    <property type="project" value="UniProtKB-KW"/>
</dbReference>
<dbReference type="GO" id="GO:0004594">
    <property type="term" value="F:pantothenate kinase activity"/>
    <property type="evidence" value="ECO:0007669"/>
    <property type="project" value="UniProtKB-UniRule"/>
</dbReference>
<dbReference type="GO" id="GO:0015937">
    <property type="term" value="P:coenzyme A biosynthetic process"/>
    <property type="evidence" value="ECO:0007669"/>
    <property type="project" value="UniProtKB-UniRule"/>
</dbReference>
<dbReference type="CDD" id="cd24015">
    <property type="entry name" value="ASKHA_NBD_PanK-III"/>
    <property type="match status" value="1"/>
</dbReference>
<dbReference type="Gene3D" id="3.30.420.40">
    <property type="match status" value="2"/>
</dbReference>
<dbReference type="HAMAP" id="MF_01274">
    <property type="entry name" value="Pantothen_kinase_3"/>
    <property type="match status" value="1"/>
</dbReference>
<dbReference type="InterPro" id="IPR043129">
    <property type="entry name" value="ATPase_NBD"/>
</dbReference>
<dbReference type="InterPro" id="IPR004619">
    <property type="entry name" value="Type_III_PanK"/>
</dbReference>
<dbReference type="NCBIfam" id="TIGR00671">
    <property type="entry name" value="baf"/>
    <property type="match status" value="1"/>
</dbReference>
<dbReference type="NCBIfam" id="NF009843">
    <property type="entry name" value="PRK13318.1-1"/>
    <property type="match status" value="1"/>
</dbReference>
<dbReference type="NCBIfam" id="NF009847">
    <property type="entry name" value="PRK13318.1-5"/>
    <property type="match status" value="1"/>
</dbReference>
<dbReference type="NCBIfam" id="NF009848">
    <property type="entry name" value="PRK13318.1-6"/>
    <property type="match status" value="1"/>
</dbReference>
<dbReference type="NCBIfam" id="NF009855">
    <property type="entry name" value="PRK13321.1"/>
    <property type="match status" value="1"/>
</dbReference>
<dbReference type="PANTHER" id="PTHR34265">
    <property type="entry name" value="TYPE III PANTOTHENATE KINASE"/>
    <property type="match status" value="1"/>
</dbReference>
<dbReference type="PANTHER" id="PTHR34265:SF1">
    <property type="entry name" value="TYPE III PANTOTHENATE KINASE"/>
    <property type="match status" value="1"/>
</dbReference>
<dbReference type="Pfam" id="PF03309">
    <property type="entry name" value="Pan_kinase"/>
    <property type="match status" value="1"/>
</dbReference>
<dbReference type="SUPFAM" id="SSF53067">
    <property type="entry name" value="Actin-like ATPase domain"/>
    <property type="match status" value="2"/>
</dbReference>
<proteinExistence type="inferred from homology"/>
<accession>C3P9L2</accession>
<gene>
    <name evidence="1" type="primary">coaX</name>
    <name type="ordered locus">BAA_0078</name>
</gene>
<organism>
    <name type="scientific">Bacillus anthracis (strain A0248)</name>
    <dbReference type="NCBI Taxonomy" id="592021"/>
    <lineage>
        <taxon>Bacteria</taxon>
        <taxon>Bacillati</taxon>
        <taxon>Bacillota</taxon>
        <taxon>Bacilli</taxon>
        <taxon>Bacillales</taxon>
        <taxon>Bacillaceae</taxon>
        <taxon>Bacillus</taxon>
        <taxon>Bacillus cereus group</taxon>
    </lineage>
</organism>
<protein>
    <recommendedName>
        <fullName evidence="1">Type III pantothenate kinase</fullName>
        <ecNumber evidence="1">2.7.1.33</ecNumber>
    </recommendedName>
    <alternativeName>
        <fullName evidence="1">PanK-III</fullName>
    </alternativeName>
    <alternativeName>
        <fullName evidence="1">Pantothenic acid kinase</fullName>
    </alternativeName>
</protein>
<keyword id="KW-0067">ATP-binding</keyword>
<keyword id="KW-0173">Coenzyme A biosynthesis</keyword>
<keyword id="KW-0963">Cytoplasm</keyword>
<keyword id="KW-0418">Kinase</keyword>
<keyword id="KW-0479">Metal-binding</keyword>
<keyword id="KW-0547">Nucleotide-binding</keyword>
<keyword id="KW-0630">Potassium</keyword>
<keyword id="KW-0808">Transferase</keyword>
<reference key="1">
    <citation type="submission" date="2009-04" db="EMBL/GenBank/DDBJ databases">
        <title>Genome sequence of Bacillus anthracis A0248.</title>
        <authorList>
            <person name="Dodson R.J."/>
            <person name="Munk A.C."/>
            <person name="Bruce D."/>
            <person name="Detter C."/>
            <person name="Tapia R."/>
            <person name="Sutton G."/>
            <person name="Sims D."/>
            <person name="Brettin T."/>
        </authorList>
    </citation>
    <scope>NUCLEOTIDE SEQUENCE [LARGE SCALE GENOMIC DNA]</scope>
    <source>
        <strain>A0248</strain>
    </source>
</reference>
<evidence type="ECO:0000255" key="1">
    <source>
        <dbReference type="HAMAP-Rule" id="MF_01274"/>
    </source>
</evidence>